<proteinExistence type="inferred from homology"/>
<gene>
    <name type="primary">Agtr1b</name>
</gene>
<organism>
    <name type="scientific">Mus musculus</name>
    <name type="common">Mouse</name>
    <dbReference type="NCBI Taxonomy" id="10090"/>
    <lineage>
        <taxon>Eukaryota</taxon>
        <taxon>Metazoa</taxon>
        <taxon>Chordata</taxon>
        <taxon>Craniata</taxon>
        <taxon>Vertebrata</taxon>
        <taxon>Euteleostomi</taxon>
        <taxon>Mammalia</taxon>
        <taxon>Eutheria</taxon>
        <taxon>Euarchontoglires</taxon>
        <taxon>Glires</taxon>
        <taxon>Rodentia</taxon>
        <taxon>Myomorpha</taxon>
        <taxon>Muroidea</taxon>
        <taxon>Muridae</taxon>
        <taxon>Murinae</taxon>
        <taxon>Mus</taxon>
        <taxon>Mus</taxon>
    </lineage>
</organism>
<sequence>MILNSSIEDGIKRIQDDCPKAGRHNYIFVMIPTLYSIIFVVGIFGNSLVVIVIYFYMKLKTVASVFLLNLALADLCFLLTLPLWAVYTAMEYQWPFGNHLCKIASASVSFNLYASVFLLTCLSIDRYLAIVHPMKSRLRRTMLVAKVTCIIIWLMAGLASLPAVIHRNVYFIENTNITVCAFHYESQNSTLPIGLGLTKNILGFVFPFVIILTSYTLIWKALKKAYKIQKNTPRNDDIFRIIMAIVLFFFFSWVPHQIFSFLDVLIQLGVIHDCEIADVVDTAMPITICIAYFNNCLNPLFYGFLGKKFKRYFLQLLKYIPPKARSHAGLSTKMSTLSYRPSDNMSSSARKSAYCFEVE</sequence>
<dbReference type="EMBL" id="S37491">
    <property type="protein sequence ID" value="AAB22270.1"/>
    <property type="molecule type" value="Genomic_DNA"/>
</dbReference>
<dbReference type="CCDS" id="CCDS17264.1"/>
<dbReference type="PIR" id="JC1194">
    <property type="entry name" value="JC1194"/>
</dbReference>
<dbReference type="RefSeq" id="NP_780295.2">
    <property type="nucleotide sequence ID" value="NM_175086.3"/>
</dbReference>
<dbReference type="SMR" id="P29755"/>
<dbReference type="FunCoup" id="P29755">
    <property type="interactions" value="1274"/>
</dbReference>
<dbReference type="STRING" id="10090.ENSMUSP00000068298"/>
<dbReference type="GlyCosmos" id="P29755">
    <property type="glycosylation" value="3 sites, No reported glycans"/>
</dbReference>
<dbReference type="GlyGen" id="P29755">
    <property type="glycosylation" value="3 sites"/>
</dbReference>
<dbReference type="iPTMnet" id="P29755"/>
<dbReference type="PhosphoSitePlus" id="P29755"/>
<dbReference type="PaxDb" id="10090-ENSMUSP00000068298"/>
<dbReference type="ProteomicsDB" id="296003"/>
<dbReference type="DNASU" id="11608"/>
<dbReference type="Ensembl" id="ENSMUST00000068316.8">
    <property type="protein sequence ID" value="ENSMUSP00000068298.8"/>
    <property type="gene ID" value="ENSMUSG00000054988.11"/>
</dbReference>
<dbReference type="GeneID" id="11608"/>
<dbReference type="KEGG" id="mmu:11608"/>
<dbReference type="UCSC" id="uc008osr.1">
    <property type="organism name" value="mouse"/>
</dbReference>
<dbReference type="AGR" id="MGI:87965"/>
<dbReference type="CTD" id="11608"/>
<dbReference type="MGI" id="MGI:87965">
    <property type="gene designation" value="Agtr1b"/>
</dbReference>
<dbReference type="VEuPathDB" id="HostDB:ENSMUSG00000054988"/>
<dbReference type="eggNOG" id="KOG3656">
    <property type="taxonomic scope" value="Eukaryota"/>
</dbReference>
<dbReference type="GeneTree" id="ENSGT01130000278303"/>
<dbReference type="HOGENOM" id="CLU_009579_8_3_1"/>
<dbReference type="InParanoid" id="P29755"/>
<dbReference type="OMA" id="ITICMAY"/>
<dbReference type="OrthoDB" id="8804420at2759"/>
<dbReference type="PhylomeDB" id="P29755"/>
<dbReference type="TreeFam" id="TF330024"/>
<dbReference type="BioGRID-ORCS" id="11608">
    <property type="hits" value="1 hit in 76 CRISPR screens"/>
</dbReference>
<dbReference type="PRO" id="PR:P29755"/>
<dbReference type="Proteomes" id="UP000000589">
    <property type="component" value="Chromosome 3"/>
</dbReference>
<dbReference type="RNAct" id="P29755">
    <property type="molecule type" value="protein"/>
</dbReference>
<dbReference type="Bgee" id="ENSMUSG00000054988">
    <property type="expression patterns" value="Expressed in lumbar dorsal root ganglion and 26 other cell types or tissues"/>
</dbReference>
<dbReference type="GO" id="GO:0005886">
    <property type="term" value="C:plasma membrane"/>
    <property type="evidence" value="ECO:0007669"/>
    <property type="project" value="UniProtKB-SubCell"/>
</dbReference>
<dbReference type="GO" id="GO:0001596">
    <property type="term" value="F:angiotensin type I receptor activity"/>
    <property type="evidence" value="ECO:0000250"/>
    <property type="project" value="UniProtKB"/>
</dbReference>
<dbReference type="GO" id="GO:0004945">
    <property type="term" value="F:angiotensin type II receptor activity"/>
    <property type="evidence" value="ECO:0007669"/>
    <property type="project" value="InterPro"/>
</dbReference>
<dbReference type="GO" id="GO:0001568">
    <property type="term" value="P:blood vessel development"/>
    <property type="evidence" value="ECO:0000316"/>
    <property type="project" value="MGI"/>
</dbReference>
<dbReference type="GO" id="GO:0042756">
    <property type="term" value="P:drinking behavior"/>
    <property type="evidence" value="ECO:0000315"/>
    <property type="project" value="MGI"/>
</dbReference>
<dbReference type="GO" id="GO:0006954">
    <property type="term" value="P:inflammatory response"/>
    <property type="evidence" value="ECO:0000316"/>
    <property type="project" value="MGI"/>
</dbReference>
<dbReference type="GO" id="GO:0001822">
    <property type="term" value="P:kidney development"/>
    <property type="evidence" value="ECO:0000316"/>
    <property type="project" value="MGI"/>
</dbReference>
<dbReference type="GO" id="GO:0002034">
    <property type="term" value="P:maintenance of blood vessel diameter homeostasis by renin-angiotensin"/>
    <property type="evidence" value="ECO:0000250"/>
    <property type="project" value="UniProtKB"/>
</dbReference>
<dbReference type="GO" id="GO:0051402">
    <property type="term" value="P:neuron apoptotic process"/>
    <property type="evidence" value="ECO:0000315"/>
    <property type="project" value="MGI"/>
</dbReference>
<dbReference type="GO" id="GO:0008217">
    <property type="term" value="P:regulation of blood pressure"/>
    <property type="evidence" value="ECO:0000315"/>
    <property type="project" value="MGI"/>
</dbReference>
<dbReference type="GO" id="GO:0001991">
    <property type="term" value="P:regulation of systemic arterial blood pressure by circulatory renin-angiotensin"/>
    <property type="evidence" value="ECO:0000316"/>
    <property type="project" value="MGI"/>
</dbReference>
<dbReference type="GO" id="GO:0019229">
    <property type="term" value="P:regulation of vasoconstriction"/>
    <property type="evidence" value="ECO:0007669"/>
    <property type="project" value="InterPro"/>
</dbReference>
<dbReference type="CDD" id="cd15192">
    <property type="entry name" value="7tmA_AT1R"/>
    <property type="match status" value="1"/>
</dbReference>
<dbReference type="FunFam" id="1.20.1070.10:FF:000088">
    <property type="entry name" value="Angiotensin II receptor type 1"/>
    <property type="match status" value="1"/>
</dbReference>
<dbReference type="Gene3D" id="1.20.1070.10">
    <property type="entry name" value="Rhodopsin 7-helix transmembrane proteins"/>
    <property type="match status" value="1"/>
</dbReference>
<dbReference type="InterPro" id="IPR000190">
    <property type="entry name" value="ATII_AT1_rcpt"/>
</dbReference>
<dbReference type="InterPro" id="IPR000248">
    <property type="entry name" value="ATII_rcpt"/>
</dbReference>
<dbReference type="InterPro" id="IPR050119">
    <property type="entry name" value="CCR1-9-like"/>
</dbReference>
<dbReference type="InterPro" id="IPR000276">
    <property type="entry name" value="GPCR_Rhodpsn"/>
</dbReference>
<dbReference type="InterPro" id="IPR017452">
    <property type="entry name" value="GPCR_Rhodpsn_7TM"/>
</dbReference>
<dbReference type="PANTHER" id="PTHR10489">
    <property type="entry name" value="CELL ADHESION MOLECULE"/>
    <property type="match status" value="1"/>
</dbReference>
<dbReference type="PANTHER" id="PTHR10489:SF956">
    <property type="entry name" value="TYPE-1 ANGIOTENSIN II RECEPTOR A"/>
    <property type="match status" value="1"/>
</dbReference>
<dbReference type="Pfam" id="PF00001">
    <property type="entry name" value="7tm_1"/>
    <property type="match status" value="1"/>
</dbReference>
<dbReference type="PRINTS" id="PR00241">
    <property type="entry name" value="ANGIOTENSINR"/>
</dbReference>
<dbReference type="PRINTS" id="PR00635">
    <property type="entry name" value="ANGIOTENSN1R"/>
</dbReference>
<dbReference type="PRINTS" id="PR00237">
    <property type="entry name" value="GPCRRHODOPSN"/>
</dbReference>
<dbReference type="SMART" id="SM01381">
    <property type="entry name" value="7TM_GPCR_Srsx"/>
    <property type="match status" value="1"/>
</dbReference>
<dbReference type="SUPFAM" id="SSF81321">
    <property type="entry name" value="Family A G protein-coupled receptor-like"/>
    <property type="match status" value="1"/>
</dbReference>
<dbReference type="PROSITE" id="PS00237">
    <property type="entry name" value="G_PROTEIN_RECEP_F1_1"/>
    <property type="match status" value="1"/>
</dbReference>
<dbReference type="PROSITE" id="PS50262">
    <property type="entry name" value="G_PROTEIN_RECEP_F1_2"/>
    <property type="match status" value="1"/>
</dbReference>
<name>AGTRB_MOUSE</name>
<accession>P29755</accession>
<keyword id="KW-1003">Cell membrane</keyword>
<keyword id="KW-1015">Disulfide bond</keyword>
<keyword id="KW-0297">G-protein coupled receptor</keyword>
<keyword id="KW-0325">Glycoprotein</keyword>
<keyword id="KW-0449">Lipoprotein</keyword>
<keyword id="KW-0472">Membrane</keyword>
<keyword id="KW-0564">Palmitate</keyword>
<keyword id="KW-0597">Phosphoprotein</keyword>
<keyword id="KW-0675">Receptor</keyword>
<keyword id="KW-1185">Reference proteome</keyword>
<keyword id="KW-0807">Transducer</keyword>
<keyword id="KW-0812">Transmembrane</keyword>
<keyword id="KW-1133">Transmembrane helix</keyword>
<reference key="1">
    <citation type="journal article" date="1992" name="Biochem. Biophys. Res. Commun.">
        <title>Cloning, characterization, and expression of two angiotensin receptor (AT-1) isoforms from the mouse genome.</title>
        <authorList>
            <person name="Sasamura H."/>
            <person name="Hein L."/>
            <person name="Krieger J.E."/>
            <person name="Pratt R.E."/>
            <person name="Kobilka B.K."/>
            <person name="Dzau V.J."/>
        </authorList>
    </citation>
    <scope>NUCLEOTIDE SEQUENCE [GENOMIC DNA]</scope>
    <source>
        <strain>BALB/cJ</strain>
        <tissue>Liver</tissue>
    </source>
</reference>
<reference key="2">
    <citation type="journal article" date="1992" name="Biochem. Biophys. Res. Commun.">
        <title>Analysis of the evolution of angiotensin II type 1 receptor gene in mammals (mouse, rat, bovine and human).</title>
        <authorList>
            <person name="Yoshida H."/>
            <person name="Kakuchi J."/>
            <person name="Guo D.F."/>
            <person name="Furuta H."/>
            <person name="Iwai N."/>
            <person name="van der Meer-De Jong R."/>
            <person name="Inagami T."/>
            <person name="Ichikawa I."/>
        </authorList>
    </citation>
    <scope>NUCLEOTIDE SEQUENCE [GENOMIC DNA]</scope>
</reference>
<comment type="function">
    <text evidence="2">Receptor for angiotensin II, a vasoconstricting peptide, which acts as a key regulator of blood pressure and sodium retention by the kidney. The activated receptor in turn couples to G-alpha proteins G(q) (GNAQ, GNA11, GNA14 or GNA15) and thus activates phospholipase C and increases the cytosolic Ca(2+) concentrations, which in turn triggers cellular responses such as stimulation of protein kinase C.</text>
</comment>
<comment type="subunit">
    <text evidence="1 2">Interacts with MAS1 (By similarity). Interacts with ARRB1 (By similarity). Interacts with FLNA (via filamin repeat 21); increases PKA-mediated phosphorylation of FLNA (By similarity).</text>
</comment>
<comment type="subcellular location">
    <subcellularLocation>
        <location evidence="2">Cell membrane</location>
        <topology evidence="2">Multi-pass membrane protein</topology>
    </subcellularLocation>
</comment>
<comment type="PTM">
    <text evidence="2">C-terminal Ser or Thr residues may be phosphorylated.</text>
</comment>
<comment type="similarity">
    <text evidence="4">Belongs to the G-protein coupled receptor 1 family.</text>
</comment>
<evidence type="ECO:0000250" key="1">
    <source>
        <dbReference type="UniProtKB" id="P25095"/>
    </source>
</evidence>
<evidence type="ECO:0000250" key="2">
    <source>
        <dbReference type="UniProtKB" id="P30556"/>
    </source>
</evidence>
<evidence type="ECO:0000255" key="3"/>
<evidence type="ECO:0000255" key="4">
    <source>
        <dbReference type="PROSITE-ProRule" id="PRU00521"/>
    </source>
</evidence>
<evidence type="ECO:0000303" key="5">
    <source>
    </source>
</evidence>
<evidence type="ECO:0000305" key="6"/>
<feature type="chain" id="PRO_0000069156" description="Type-1 angiotensin II receptor B">
    <location>
        <begin position="1"/>
        <end position="359"/>
    </location>
</feature>
<feature type="topological domain" description="Extracellular" evidence="2">
    <location>
        <begin position="1"/>
        <end position="25"/>
    </location>
</feature>
<feature type="transmembrane region" description="Helical; Name=1" evidence="2">
    <location>
        <begin position="26"/>
        <end position="55"/>
    </location>
</feature>
<feature type="topological domain" description="Cytoplasmic" evidence="2">
    <location>
        <begin position="56"/>
        <end position="61"/>
    </location>
</feature>
<feature type="transmembrane region" description="Helical; Name=2" evidence="2">
    <location>
        <begin position="62"/>
        <end position="89"/>
    </location>
</feature>
<feature type="topological domain" description="Extracellular" evidence="2">
    <location>
        <begin position="90"/>
        <end position="98"/>
    </location>
</feature>
<feature type="transmembrane region" description="Helical; Name=3" evidence="2">
    <location>
        <begin position="99"/>
        <end position="125"/>
    </location>
</feature>
<feature type="topological domain" description="Cytoplasmic" evidence="2">
    <location>
        <begin position="126"/>
        <end position="141"/>
    </location>
</feature>
<feature type="transmembrane region" description="Helical; Name=4" evidence="2">
    <location>
        <begin position="142"/>
        <end position="165"/>
    </location>
</feature>
<feature type="topological domain" description="Extracellular" evidence="2">
    <location>
        <begin position="166"/>
        <end position="190"/>
    </location>
</feature>
<feature type="transmembrane region" description="Helical; Name=5" evidence="2">
    <location>
        <begin position="191"/>
        <end position="216"/>
    </location>
</feature>
<feature type="topological domain" description="Cytoplasmic" evidence="2">
    <location>
        <begin position="217"/>
        <end position="239"/>
    </location>
</feature>
<feature type="transmembrane region" description="Helical; Name=6" evidence="2">
    <location>
        <begin position="240"/>
        <end position="268"/>
    </location>
</feature>
<feature type="topological domain" description="Extracellular" evidence="2">
    <location>
        <begin position="269"/>
        <end position="278"/>
    </location>
</feature>
<feature type="transmembrane region" description="Helical; Name=7" evidence="2">
    <location>
        <begin position="279"/>
        <end position="304"/>
    </location>
</feature>
<feature type="topological domain" description="Cytoplasmic" evidence="2">
    <location>
        <begin position="305"/>
        <end position="359"/>
    </location>
</feature>
<feature type="binding site" evidence="2">
    <location>
        <position position="15"/>
    </location>
    <ligand>
        <name>angiotensin II</name>
        <dbReference type="ChEBI" id="CHEBI:58506"/>
    </ligand>
</feature>
<feature type="binding site" evidence="2">
    <location>
        <position position="17"/>
    </location>
    <ligand>
        <name>angiotensin II</name>
        <dbReference type="ChEBI" id="CHEBI:58506"/>
    </ligand>
</feature>
<feature type="binding site" evidence="2">
    <location>
        <position position="167"/>
    </location>
    <ligand>
        <name>angiotensin II</name>
        <dbReference type="ChEBI" id="CHEBI:58506"/>
    </ligand>
</feature>
<feature type="binding site" evidence="2">
    <location>
        <position position="182"/>
    </location>
    <ligand>
        <name>angiotensin II</name>
        <dbReference type="ChEBI" id="CHEBI:58506"/>
    </ligand>
</feature>
<feature type="binding site" evidence="2">
    <location>
        <position position="183"/>
    </location>
    <ligand>
        <name>angiotensin II</name>
        <dbReference type="ChEBI" id="CHEBI:58506"/>
    </ligand>
</feature>
<feature type="binding site" evidence="2">
    <location>
        <position position="184"/>
    </location>
    <ligand>
        <name>angiotensin II</name>
        <dbReference type="ChEBI" id="CHEBI:58506"/>
    </ligand>
</feature>
<feature type="binding site" evidence="2">
    <location>
        <position position="199"/>
    </location>
    <ligand>
        <name>angiotensin II</name>
        <dbReference type="ChEBI" id="CHEBI:58506"/>
    </ligand>
</feature>
<feature type="lipid moiety-binding region" description="S-palmitoyl cysteine" evidence="3">
    <location>
        <position position="355"/>
    </location>
</feature>
<feature type="glycosylation site" description="N-linked (GlcNAc...) asparagine" evidence="3">
    <location>
        <position position="4"/>
    </location>
</feature>
<feature type="glycosylation site" description="N-linked (GlcNAc...) asparagine" evidence="3">
    <location>
        <position position="176"/>
    </location>
</feature>
<feature type="glycosylation site" description="N-linked (GlcNAc...) asparagine" evidence="3">
    <location>
        <position position="188"/>
    </location>
</feature>
<feature type="disulfide bond" evidence="2">
    <location>
        <begin position="18"/>
        <end position="274"/>
    </location>
</feature>
<feature type="disulfide bond" evidence="4">
    <location>
        <begin position="101"/>
        <end position="180"/>
    </location>
</feature>
<feature type="sequence conflict" description="In Ref. 2." evidence="6" ref="2">
    <original>I</original>
    <variation>T</variation>
    <location>
        <position position="7"/>
    </location>
</feature>
<feature type="sequence conflict" description="In Ref. 2." evidence="6" ref="2">
    <original>H</original>
    <variation>Y</variation>
    <location>
        <position position="166"/>
    </location>
</feature>
<feature type="sequence conflict" description="In Ref. 2." evidence="6" ref="2">
    <original>E</original>
    <variation>A</variation>
    <location>
        <position position="173"/>
    </location>
</feature>
<feature type="sequence conflict" description="In Ref. 2." evidence="6" ref="2">
    <original>V</original>
    <variation>E</variation>
    <location>
        <position position="205"/>
    </location>
</feature>
<feature type="sequence conflict" description="In Ref. 2." evidence="6" ref="2">
    <original>T</original>
    <variation>I</variation>
    <location>
        <position position="232"/>
    </location>
</feature>
<feature type="sequence conflict" description="In Ref. 2." evidence="6" ref="2">
    <original>F</original>
    <variation>G</variation>
    <location>
        <position position="239"/>
    </location>
</feature>
<protein>
    <recommendedName>
        <fullName evidence="6">Type-1 angiotensin II receptor B</fullName>
    </recommendedName>
    <alternativeName>
        <fullName>AT3</fullName>
    </alternativeName>
    <alternativeName>
        <fullName evidence="5">Angiotensin II type-1 receptor B</fullName>
        <shortName evidence="5">AT1 receptor B</shortName>
    </alternativeName>
</protein>